<accession>A0M345</accession>
<name>MEND_CHRFK</name>
<keyword id="KW-0460">Magnesium</keyword>
<keyword id="KW-0464">Manganese</keyword>
<keyword id="KW-0474">Menaquinone biosynthesis</keyword>
<keyword id="KW-0479">Metal-binding</keyword>
<keyword id="KW-0786">Thiamine pyrophosphate</keyword>
<keyword id="KW-0808">Transferase</keyword>
<proteinExistence type="inferred from homology"/>
<feature type="chain" id="PRO_0000341751" description="2-succinyl-5-enolpyruvyl-6-hydroxy-3-cyclohexene-1-carboxylate synthase">
    <location>
        <begin position="1"/>
        <end position="577"/>
    </location>
</feature>
<organism>
    <name type="scientific">Christiangramia forsetii (strain DSM 17595 / CGMCC 1.15422 / KT0803)</name>
    <name type="common">Gramella forsetii</name>
    <dbReference type="NCBI Taxonomy" id="411154"/>
    <lineage>
        <taxon>Bacteria</taxon>
        <taxon>Pseudomonadati</taxon>
        <taxon>Bacteroidota</taxon>
        <taxon>Flavobacteriia</taxon>
        <taxon>Flavobacteriales</taxon>
        <taxon>Flavobacteriaceae</taxon>
        <taxon>Christiangramia</taxon>
    </lineage>
</organism>
<evidence type="ECO:0000255" key="1">
    <source>
        <dbReference type="HAMAP-Rule" id="MF_01659"/>
    </source>
</evidence>
<sequence length="577" mass="66383">MKYSKIPVARSVVALCVAKDIKHVVISPGSRNAPLTIGFTHHDEITPYSIVDERCAAFFALGLAQELKKPVALVCTSGSALLNYYPAIAEAYYSDIPLVIISADRPIERIDIGDGQTIRQKNVFENHILYSANLYSELVLENQSQDPKLQQKQFEAQKHNEREVNLALNKAIEEKGPVHINVPFYEPLYDTVENINVNPLQIFPEIKERHYSEKQLQNYANEWNRAERKMVIVGVAQPNAVEQKFLEGLATDPSVIVLTETTSNLHQEQFFTRIDTLIGPIEKDENREELFNRLQPDILLTFGGMIVSKKIKSFLRNYSPQHHWHIDSKKAYNTFFCLNKHFETDVNSFFSEFFPLTKRTESDYGSFWKDIKGKRQHRHEDYMAEIPYSDLKAMQEIYQKIPKNSVLHFGNSSTIRYAQLFEWDKSLKIYCNRGTSGIDGSVSTAVGASVSSEEPVTIITGDLSFFYDSNALWNNYIPSNFRIIILNNNGGGIFRILPGNKNSENFEKYFETTHNLKAKPICDLYNFDYEKANSEEEIQKVMKDFYSESGKPKLLEIFTPRKINDEVLLEYFNFMKS</sequence>
<gene>
    <name evidence="1" type="primary">menD</name>
    <name type="ordered locus">GFO_2075</name>
</gene>
<dbReference type="EC" id="2.2.1.9" evidence="1"/>
<dbReference type="EMBL" id="CU207366">
    <property type="protein sequence ID" value="CAL67040.1"/>
    <property type="molecule type" value="Genomic_DNA"/>
</dbReference>
<dbReference type="RefSeq" id="WP_011709943.1">
    <property type="nucleotide sequence ID" value="NC_008571.1"/>
</dbReference>
<dbReference type="SMR" id="A0M345"/>
<dbReference type="STRING" id="411154.GFO_2075"/>
<dbReference type="KEGG" id="gfo:GFO_2075"/>
<dbReference type="eggNOG" id="COG1165">
    <property type="taxonomic scope" value="Bacteria"/>
</dbReference>
<dbReference type="HOGENOM" id="CLU_006051_3_0_10"/>
<dbReference type="OrthoDB" id="9791859at2"/>
<dbReference type="UniPathway" id="UPA00079"/>
<dbReference type="UniPathway" id="UPA01057">
    <property type="reaction ID" value="UER00164"/>
</dbReference>
<dbReference type="Proteomes" id="UP000000755">
    <property type="component" value="Chromosome"/>
</dbReference>
<dbReference type="GO" id="GO:0070204">
    <property type="term" value="F:2-succinyl-5-enolpyruvyl-6-hydroxy-3-cyclohexene-1-carboxylic-acid synthase activity"/>
    <property type="evidence" value="ECO:0007669"/>
    <property type="project" value="UniProtKB-UniRule"/>
</dbReference>
<dbReference type="GO" id="GO:0000287">
    <property type="term" value="F:magnesium ion binding"/>
    <property type="evidence" value="ECO:0007669"/>
    <property type="project" value="UniProtKB-UniRule"/>
</dbReference>
<dbReference type="GO" id="GO:0030145">
    <property type="term" value="F:manganese ion binding"/>
    <property type="evidence" value="ECO:0007669"/>
    <property type="project" value="UniProtKB-UniRule"/>
</dbReference>
<dbReference type="GO" id="GO:0030976">
    <property type="term" value="F:thiamine pyrophosphate binding"/>
    <property type="evidence" value="ECO:0007669"/>
    <property type="project" value="UniProtKB-UniRule"/>
</dbReference>
<dbReference type="GO" id="GO:0009234">
    <property type="term" value="P:menaquinone biosynthetic process"/>
    <property type="evidence" value="ECO:0007669"/>
    <property type="project" value="UniProtKB-UniRule"/>
</dbReference>
<dbReference type="CDD" id="cd07037">
    <property type="entry name" value="TPP_PYR_MenD"/>
    <property type="match status" value="1"/>
</dbReference>
<dbReference type="CDD" id="cd02009">
    <property type="entry name" value="TPP_SHCHC_synthase"/>
    <property type="match status" value="1"/>
</dbReference>
<dbReference type="Gene3D" id="3.40.50.970">
    <property type="match status" value="2"/>
</dbReference>
<dbReference type="Gene3D" id="3.40.50.1220">
    <property type="entry name" value="TPP-binding domain"/>
    <property type="match status" value="1"/>
</dbReference>
<dbReference type="HAMAP" id="MF_01659">
    <property type="entry name" value="MenD"/>
    <property type="match status" value="1"/>
</dbReference>
<dbReference type="InterPro" id="IPR004433">
    <property type="entry name" value="MenaQ_synth_MenD"/>
</dbReference>
<dbReference type="InterPro" id="IPR032264">
    <property type="entry name" value="MenD_middle"/>
</dbReference>
<dbReference type="InterPro" id="IPR029061">
    <property type="entry name" value="THDP-binding"/>
</dbReference>
<dbReference type="InterPro" id="IPR012001">
    <property type="entry name" value="Thiamin_PyroP_enz_TPP-bd_dom"/>
</dbReference>
<dbReference type="InterPro" id="IPR011766">
    <property type="entry name" value="TPP_enzyme_TPP-bd"/>
</dbReference>
<dbReference type="NCBIfam" id="TIGR00173">
    <property type="entry name" value="menD"/>
    <property type="match status" value="1"/>
</dbReference>
<dbReference type="PANTHER" id="PTHR42916">
    <property type="entry name" value="2-SUCCINYL-5-ENOLPYRUVYL-6-HYDROXY-3-CYCLOHEXENE-1-CARBOXYLATE SYNTHASE"/>
    <property type="match status" value="1"/>
</dbReference>
<dbReference type="PANTHER" id="PTHR42916:SF1">
    <property type="entry name" value="PROTEIN PHYLLO, CHLOROPLASTIC"/>
    <property type="match status" value="1"/>
</dbReference>
<dbReference type="Pfam" id="PF02775">
    <property type="entry name" value="TPP_enzyme_C"/>
    <property type="match status" value="1"/>
</dbReference>
<dbReference type="Pfam" id="PF16582">
    <property type="entry name" value="TPP_enzyme_M_2"/>
    <property type="match status" value="1"/>
</dbReference>
<dbReference type="Pfam" id="PF02776">
    <property type="entry name" value="TPP_enzyme_N"/>
    <property type="match status" value="1"/>
</dbReference>
<dbReference type="PIRSF" id="PIRSF004983">
    <property type="entry name" value="MenD"/>
    <property type="match status" value="1"/>
</dbReference>
<dbReference type="SUPFAM" id="SSF52518">
    <property type="entry name" value="Thiamin diphosphate-binding fold (THDP-binding)"/>
    <property type="match status" value="2"/>
</dbReference>
<protein>
    <recommendedName>
        <fullName evidence="1">2-succinyl-5-enolpyruvyl-6-hydroxy-3-cyclohexene-1-carboxylate synthase</fullName>
        <shortName evidence="1">SEPHCHC synthase</shortName>
        <ecNumber evidence="1">2.2.1.9</ecNumber>
    </recommendedName>
    <alternativeName>
        <fullName evidence="1">Menaquinone biosynthesis protein MenD</fullName>
    </alternativeName>
</protein>
<comment type="function">
    <text evidence="1">Catalyzes the thiamine diphosphate-dependent decarboxylation of 2-oxoglutarate and the subsequent addition of the resulting succinic semialdehyde-thiamine pyrophosphate anion to isochorismate to yield 2-succinyl-5-enolpyruvyl-6-hydroxy-3-cyclohexene-1-carboxylate (SEPHCHC).</text>
</comment>
<comment type="catalytic activity">
    <reaction evidence="1">
        <text>isochorismate + 2-oxoglutarate + H(+) = 5-enolpyruvoyl-6-hydroxy-2-succinyl-cyclohex-3-ene-1-carboxylate + CO2</text>
        <dbReference type="Rhea" id="RHEA:25593"/>
        <dbReference type="ChEBI" id="CHEBI:15378"/>
        <dbReference type="ChEBI" id="CHEBI:16526"/>
        <dbReference type="ChEBI" id="CHEBI:16810"/>
        <dbReference type="ChEBI" id="CHEBI:29780"/>
        <dbReference type="ChEBI" id="CHEBI:58818"/>
        <dbReference type="EC" id="2.2.1.9"/>
    </reaction>
</comment>
<comment type="cofactor">
    <cofactor evidence="1">
        <name>Mg(2+)</name>
        <dbReference type="ChEBI" id="CHEBI:18420"/>
    </cofactor>
    <cofactor evidence="1">
        <name>Mn(2+)</name>
        <dbReference type="ChEBI" id="CHEBI:29035"/>
    </cofactor>
</comment>
<comment type="cofactor">
    <cofactor evidence="1">
        <name>thiamine diphosphate</name>
        <dbReference type="ChEBI" id="CHEBI:58937"/>
    </cofactor>
    <text evidence="1">Binds 1 thiamine pyrophosphate per subunit.</text>
</comment>
<comment type="pathway">
    <text evidence="1">Quinol/quinone metabolism; 1,4-dihydroxy-2-naphthoate biosynthesis; 1,4-dihydroxy-2-naphthoate from chorismate: step 2/7.</text>
</comment>
<comment type="pathway">
    <text evidence="1">Quinol/quinone metabolism; menaquinone biosynthesis.</text>
</comment>
<comment type="subunit">
    <text evidence="1">Homodimer.</text>
</comment>
<comment type="similarity">
    <text evidence="1">Belongs to the TPP enzyme family. MenD subfamily.</text>
</comment>
<reference key="1">
    <citation type="journal article" date="2006" name="Environ. Microbiol.">
        <title>Whole genome analysis of the marine Bacteroidetes'Gramella forsetii' reveals adaptations to degradation of polymeric organic matter.</title>
        <authorList>
            <person name="Bauer M."/>
            <person name="Kube M."/>
            <person name="Teeling H."/>
            <person name="Richter M."/>
            <person name="Lombardot T."/>
            <person name="Allers E."/>
            <person name="Wuerdemann C.A."/>
            <person name="Quast C."/>
            <person name="Kuhl H."/>
            <person name="Knaust F."/>
            <person name="Woebken D."/>
            <person name="Bischof K."/>
            <person name="Mussmann M."/>
            <person name="Choudhuri J.V."/>
            <person name="Meyer F."/>
            <person name="Reinhardt R."/>
            <person name="Amann R.I."/>
            <person name="Gloeckner F.O."/>
        </authorList>
    </citation>
    <scope>NUCLEOTIDE SEQUENCE [LARGE SCALE GENOMIC DNA]</scope>
    <source>
        <strain>DSM 17595 / CGMCC 1.15422 / KT0803</strain>
    </source>
</reference>